<evidence type="ECO:0000255" key="1">
    <source>
        <dbReference type="HAMAP-Rule" id="MF_00012"/>
    </source>
</evidence>
<evidence type="ECO:0000269" key="2">
    <source>
    </source>
</evidence>
<evidence type="ECO:0000269" key="3">
    <source>
    </source>
</evidence>
<evidence type="ECO:0000269" key="4">
    <source>
    </source>
</evidence>
<evidence type="ECO:0000269" key="5">
    <source>
    </source>
</evidence>
<evidence type="ECO:0000303" key="6">
    <source>
    </source>
</evidence>
<evidence type="ECO:0000303" key="7">
    <source>
    </source>
</evidence>
<evidence type="ECO:0000305" key="8"/>
<evidence type="ECO:0000305" key="9">
    <source>
    </source>
</evidence>
<evidence type="ECO:0000305" key="10">
    <source>
    </source>
</evidence>
<gene>
    <name evidence="1" type="primary">ilvD</name>
    <name type="ordered locus">b3771</name>
    <name type="ordered locus">JW5605</name>
</gene>
<keyword id="KW-0001">2Fe-2S</keyword>
<keyword id="KW-0028">Amino-acid biosynthesis</keyword>
<keyword id="KW-0100">Branched-chain amino acid biosynthesis</keyword>
<keyword id="KW-0903">Direct protein sequencing</keyword>
<keyword id="KW-0408">Iron</keyword>
<keyword id="KW-0411">Iron-sulfur</keyword>
<keyword id="KW-0456">Lyase</keyword>
<keyword id="KW-0460">Magnesium</keyword>
<keyword id="KW-0479">Metal-binding</keyword>
<keyword id="KW-1185">Reference proteome</keyword>
<feature type="initiator methionine" description="Removed" evidence="5">
    <location>
        <position position="1"/>
    </location>
</feature>
<feature type="chain" id="PRO_0000103465" description="Dihydroxy-acid dehydratase">
    <location>
        <begin position="2"/>
        <end position="616"/>
    </location>
</feature>
<feature type="active site" description="Proton acceptor" evidence="1">
    <location>
        <position position="517"/>
    </location>
</feature>
<feature type="binding site" evidence="1">
    <location>
        <position position="81"/>
    </location>
    <ligand>
        <name>Mg(2+)</name>
        <dbReference type="ChEBI" id="CHEBI:18420"/>
    </ligand>
</feature>
<feature type="binding site" evidence="1">
    <location>
        <position position="122"/>
    </location>
    <ligand>
        <name>[2Fe-2S] cluster</name>
        <dbReference type="ChEBI" id="CHEBI:190135"/>
    </ligand>
</feature>
<feature type="binding site" evidence="1">
    <location>
        <position position="123"/>
    </location>
    <ligand>
        <name>Mg(2+)</name>
        <dbReference type="ChEBI" id="CHEBI:18420"/>
    </ligand>
</feature>
<feature type="binding site" description="via carbamate group" evidence="1">
    <location>
        <position position="124"/>
    </location>
    <ligand>
        <name>Mg(2+)</name>
        <dbReference type="ChEBI" id="CHEBI:18420"/>
    </ligand>
</feature>
<feature type="binding site" evidence="1">
    <location>
        <position position="195"/>
    </location>
    <ligand>
        <name>[2Fe-2S] cluster</name>
        <dbReference type="ChEBI" id="CHEBI:190135"/>
    </ligand>
</feature>
<feature type="binding site" evidence="1">
    <location>
        <position position="491"/>
    </location>
    <ligand>
        <name>Mg(2+)</name>
        <dbReference type="ChEBI" id="CHEBI:18420"/>
    </ligand>
</feature>
<feature type="modified residue" description="N6-carboxylysine" evidence="1">
    <location>
        <position position="124"/>
    </location>
</feature>
<feature type="sequence conflict" description="In Ref. 2; AAA24023." evidence="8" ref="2">
    <original>PKYRSATTTHGRNMAGARALWRA</original>
    <variation>VVIWRVLVRCGP</variation>
    <location>
        <begin position="2"/>
        <end position="24"/>
    </location>
</feature>
<feature type="sequence conflict" description="In Ref. 2; AAA24023." evidence="8" ref="2">
    <original>L</original>
    <variation>P</variation>
    <location>
        <position position="164"/>
    </location>
</feature>
<feature type="sequence conflict" description="In Ref. 2; AAA24023." evidence="8" ref="2">
    <original>CIRSLEHAYSKDGGLAVLYGNFAENGCIVK</original>
    <variation>VSARWNTPTAKTAAWRCSTVILRKRLHRE</variation>
    <location>
        <begin position="408"/>
        <end position="437"/>
    </location>
</feature>
<feature type="sequence conflict" description="In Ref. 2; AAA24023." evidence="8" ref="2">
    <original>D</original>
    <variation>H</variation>
    <location>
        <position position="610"/>
    </location>
</feature>
<comment type="function">
    <text evidence="2 5">Functions in the biosynthesis of branched-chain amino acids. Catalyzes the dehydration of (2R,3R)-2,3-dihydroxy-3-methylpentanoate (2,3-dihydroxy-3-methylvalerate) into 2-oxo-3-methylpentanoate (2-oxo-3-methylvalerate) and of (2R)-2,3-dihydroxy-3-methylbutanoate (2,3-dihydroxyisovalerate) into 2-oxo-3-methylbutanoate (2-oxoisovalerate), the penultimate precursor to L-isoleucine and L-valine, respectively.</text>
</comment>
<comment type="catalytic activity">
    <reaction evidence="2 4 5">
        <text>(2R)-2,3-dihydroxy-3-methylbutanoate = 3-methyl-2-oxobutanoate + H2O</text>
        <dbReference type="Rhea" id="RHEA:24809"/>
        <dbReference type="ChEBI" id="CHEBI:11851"/>
        <dbReference type="ChEBI" id="CHEBI:15377"/>
        <dbReference type="ChEBI" id="CHEBI:49072"/>
        <dbReference type="EC" id="4.2.1.9"/>
    </reaction>
    <physiologicalReaction direction="left-to-right" evidence="9 10">
        <dbReference type="Rhea" id="RHEA:24810"/>
    </physiologicalReaction>
</comment>
<comment type="catalytic activity">
    <reaction evidence="2">
        <text>(2R,3R)-2,3-dihydroxy-3-methylpentanoate = (S)-3-methyl-2-oxopentanoate + H2O</text>
        <dbReference type="Rhea" id="RHEA:27694"/>
        <dbReference type="ChEBI" id="CHEBI:15377"/>
        <dbReference type="ChEBI" id="CHEBI:35146"/>
        <dbReference type="ChEBI" id="CHEBI:49258"/>
        <dbReference type="EC" id="4.2.1.9"/>
    </reaction>
    <physiologicalReaction direction="left-to-right" evidence="9">
        <dbReference type="Rhea" id="RHEA:27695"/>
    </physiologicalReaction>
</comment>
<comment type="cofactor">
    <cofactor evidence="1">
        <name>[2Fe-2S] cluster</name>
        <dbReference type="ChEBI" id="CHEBI:190135"/>
    </cofactor>
    <text evidence="1">Binds 1 [2Fe-2S] cluster per subunit. This cluster acts as a Lewis acid cofactor.</text>
</comment>
<comment type="cofactor">
    <cofactor evidence="1">
        <name>Mg(2+)</name>
        <dbReference type="ChEBI" id="CHEBI:18420"/>
    </cofactor>
</comment>
<comment type="biophysicochemical properties">
    <kinetics>
        <KM evidence="5">1.5 mM for racemic 2,3-dihydroxy-3-methylbutanoate</KM>
        <KM evidence="5">0.75 mM for (2R)-2,3-dihydroxy-3-methylbutanoate</KM>
        <text evidence="5">Since only one of the isomers present in the racemic substrate is active, the corrected Km would be 0.75 mM.</text>
    </kinetics>
    <phDependence>
        <text evidence="2">Optimum pH is 7.8-7.9.</text>
    </phDependence>
</comment>
<comment type="pathway">
    <text evidence="1 3">Amino-acid biosynthesis; L-isoleucine biosynthesis; L-isoleucine from 2-oxobutanoate: step 3/4.</text>
</comment>
<comment type="pathway">
    <text evidence="1 3">Amino-acid biosynthesis; L-valine biosynthesis; L-valine from pyruvate: step 3/4.</text>
</comment>
<comment type="subunit">
    <text evidence="5">Homodimer.</text>
</comment>
<comment type="similarity">
    <text evidence="1">Belongs to the IlvD/Edd family.</text>
</comment>
<comment type="caution">
    <text evidence="4 5 8">Was originally thought to contain a [4Fe-4S] cluster (PubMed:7771772, PubMed:8325851). However, a more recent study in M.tuberculosis has shown that this enzyme contains a [2Fe-2S] cluster, which is unstable and subject to degradation.</text>
</comment>
<reference key="1">
    <citation type="journal article" date="1987" name="Gene">
        <title>The complete nucleotide sequence of the ilvGMEDA cluster of Escherichia coli K-12.</title>
        <authorList>
            <person name="Cox J.L."/>
            <person name="Cox B.J."/>
            <person name="Fidanza V."/>
            <person name="Calhoun D.H."/>
        </authorList>
    </citation>
    <scope>NUCLEOTIDE SEQUENCE [GENOMIC DNA]</scope>
    <source>
        <strain>K12</strain>
    </source>
</reference>
<reference key="2">
    <citation type="journal article" date="1987" name="Nucleic Acids Res.">
        <title>The complete nucleotide sequence of the ilvGMEDA operon of Escherichia coli K-12.</title>
        <authorList>
            <person name="Lawther R.P."/>
            <person name="Wek R.C."/>
            <person name="Lopes J.M."/>
            <person name="Pereira R."/>
            <person name="Taillon B.E."/>
            <person name="Hatfield G.W."/>
        </authorList>
    </citation>
    <scope>NUCLEOTIDE SEQUENCE [GENOMIC DNA]</scope>
    <scope>PATHWAY</scope>
    <source>
        <strain>K12</strain>
    </source>
</reference>
<reference key="3">
    <citation type="journal article" date="1992" name="Science">
        <title>Analysis of the Escherichia coli genome: DNA sequence of the region from 84.5 to 86.5 minutes.</title>
        <authorList>
            <person name="Daniels D.L."/>
            <person name="Plunkett G. III"/>
            <person name="Burland V.D."/>
            <person name="Blattner F.R."/>
        </authorList>
    </citation>
    <scope>NUCLEOTIDE SEQUENCE [LARGE SCALE GENOMIC DNA]</scope>
    <source>
        <strain>K12 / MG1655 / ATCC 47076</strain>
    </source>
</reference>
<reference key="4">
    <citation type="journal article" date="1997" name="Science">
        <title>The complete genome sequence of Escherichia coli K-12.</title>
        <authorList>
            <person name="Blattner F.R."/>
            <person name="Plunkett G. III"/>
            <person name="Bloch C.A."/>
            <person name="Perna N.T."/>
            <person name="Burland V."/>
            <person name="Riley M."/>
            <person name="Collado-Vides J."/>
            <person name="Glasner J.D."/>
            <person name="Rode C.K."/>
            <person name="Mayhew G.F."/>
            <person name="Gregor J."/>
            <person name="Davis N.W."/>
            <person name="Kirkpatrick H.A."/>
            <person name="Goeden M.A."/>
            <person name="Rose D.J."/>
            <person name="Mau B."/>
            <person name="Shao Y."/>
        </authorList>
    </citation>
    <scope>NUCLEOTIDE SEQUENCE [LARGE SCALE GENOMIC DNA]</scope>
    <source>
        <strain>K12 / MG1655 / ATCC 47076</strain>
    </source>
</reference>
<reference key="5">
    <citation type="journal article" date="2006" name="Nucleic Acids Res.">
        <title>Escherichia coli K-12: a cooperatively developed annotation snapshot -- 2005.</title>
        <authorList>
            <person name="Riley M."/>
            <person name="Abe T."/>
            <person name="Arnaud M.B."/>
            <person name="Berlyn M.K.B."/>
            <person name="Blattner F.R."/>
            <person name="Chaudhuri R.R."/>
            <person name="Glasner J.D."/>
            <person name="Horiuchi T."/>
            <person name="Keseler I.M."/>
            <person name="Kosuge T."/>
            <person name="Mori H."/>
            <person name="Perna N.T."/>
            <person name="Plunkett G. III"/>
            <person name="Rudd K.E."/>
            <person name="Serres M.H."/>
            <person name="Thomas G.H."/>
            <person name="Thomson N.R."/>
            <person name="Wishart D."/>
            <person name="Wanner B.L."/>
        </authorList>
    </citation>
    <scope>SEQUENCE REVISION</scope>
</reference>
<reference key="6">
    <citation type="journal article" date="2006" name="Mol. Syst. Biol.">
        <title>Highly accurate genome sequences of Escherichia coli K-12 strains MG1655 and W3110.</title>
        <authorList>
            <person name="Hayashi K."/>
            <person name="Morooka N."/>
            <person name="Yamamoto Y."/>
            <person name="Fujita K."/>
            <person name="Isono K."/>
            <person name="Choi S."/>
            <person name="Ohtsubo E."/>
            <person name="Baba T."/>
            <person name="Wanner B.L."/>
            <person name="Mori H."/>
            <person name="Horiuchi T."/>
        </authorList>
    </citation>
    <scope>NUCLEOTIDE SEQUENCE [LARGE SCALE GENOMIC DNA]</scope>
    <source>
        <strain>K12 / W3110 / ATCC 27325 / DSM 5911</strain>
    </source>
</reference>
<reference key="7">
    <citation type="journal article" date="1985" name="J. Biochem.">
        <title>Branched-chain amino acid aminotransferase of Escherichia coli: nucleotide sequence of the ilvE gene and the deduced amino acid sequence.</title>
        <authorList>
            <person name="Kuramitsu S."/>
            <person name="Ogawa T."/>
            <person name="Ogawa H."/>
            <person name="Kagamiyama H."/>
        </authorList>
    </citation>
    <scope>NUCLEOTIDE SEQUENCE [GENOMIC DNA] OF 1-100</scope>
    <source>
        <strain>K12</strain>
    </source>
</reference>
<reference key="8">
    <citation type="submission" date="1987-06" db="EMBL/GenBank/DDBJ databases">
        <authorList>
            <person name="Garrison E."/>
            <person name="Harms E.H."/>
            <person name="Umbarger H.E."/>
        </authorList>
    </citation>
    <scope>NUCLEOTIDE SEQUENCE [GENOMIC DNA] OF 575-616</scope>
</reference>
<reference key="9">
    <citation type="journal article" date="1993" name="J. Biol. Chem.">
        <title>The role and properties of the iron-sulfur cluster in Escherichia coli dihydroxy-acid dehydratase.</title>
        <authorList>
            <person name="Flint D.H."/>
            <person name="Emptage M.H."/>
            <person name="Finnegan M.G."/>
            <person name="Fu W."/>
            <person name="Johnson M.K."/>
        </authorList>
    </citation>
    <scope>PROTEIN SEQUENCE OF 2-23</scope>
    <scope>FUNCTION</scope>
    <scope>CATALYTIC ACTIVITY</scope>
    <scope>BIOPHYSICOCHEMICAL PROPERTIES</scope>
    <scope>SUBUNIT</scope>
    <source>
        <strain>K12 / JA221 / ATCC 33875 / DSM 5209</strain>
    </source>
</reference>
<reference key="10">
    <citation type="journal article" date="1961" name="J. Biol. Chem.">
        <title>Dihydroxy acid dehydrase: an enzyme involved in the biosynthesis of isoleucine and valine.</title>
        <authorList>
            <person name="Myers J.W."/>
        </authorList>
    </citation>
    <scope>FUNCTION</scope>
    <scope>CATALYTIC ACTIVITY</scope>
    <scope>BIOPHYSICOCHEMICAL PROPERTIES</scope>
    <source>
        <strain>K12</strain>
    </source>
</reference>
<reference key="11">
    <citation type="journal article" date="1995" name="Arch. Biochem. Biophys.">
        <title>Dihydroxy-acid dehydratase, a 4Fe-4S cluster-containing enzyme in Escherichia coli: effects of intracellular superoxide dismutase on its inactivation by oxidant stress.</title>
        <authorList>
            <person name="Brown O.R."/>
            <person name="Smyk-Randall E."/>
            <person name="Draczynska-Lusiak B."/>
            <person name="Fee J.A."/>
        </authorList>
    </citation>
    <scope>CATALYTIC ACTIVITY</scope>
</reference>
<sequence>MPKYRSATTTHGRNMAGARALWRATGMTDADFGKPIIAVVNSFTQFVPGHVHLRDLGKLVAEQIEAAGGVAKEFNTIAVDDGIAMGHGGMLYSLPSRELIADSVEYMVNAHCADAMVCISNCDKITPGMLMASLRLNIPVIFVSGGPMEAGKTKLSDQIIKLDLVDAMIQGADPKVSDSQSDQVERSACPTCGSCSGMFTANSMNCLTEALGLSQPGNGSLLATHADRKQLFLNAGKRIVELTKRYYEQNDESALPRNIASKAAFENAMTLDIAMGGSTNTVLHLLAAAQEAEIDFTMSDIDKLSRKVPQLCKVAPSTQKYHMEDVHRAGGVIGILGELDRAGLLNRDVKNVLGLTLPQTLEQYDVMLTQDDAVKNMFRAGPAGIRTTQAFSQDCRWDTLDDDRANGCIRSLEHAYSKDGGLAVLYGNFAENGCIVKTAGVDDSILKFTGPAKVYESQDDAVEAILGGKVVAGDVVVIRYEGPKGGPGMQEMLYPTSFLKSMGLGKACALITDGRFSGGTSGLSIGHVSPEAASGGSIGLIEDGDLIAIDIPNRGIQLQVSDAELAARREAQDARGDKAWTPKNRERQVSFALRAYASLATSADKGAVRDKSKLGG</sequence>
<dbReference type="EC" id="4.2.1.9" evidence="2 5"/>
<dbReference type="EMBL" id="X04890">
    <property type="protein sequence ID" value="CAA28576.1"/>
    <property type="molecule type" value="Genomic_DNA"/>
</dbReference>
<dbReference type="EMBL" id="M10313">
    <property type="protein sequence ID" value="AAB59053.1"/>
    <property type="molecule type" value="Genomic_DNA"/>
</dbReference>
<dbReference type="EMBL" id="M87049">
    <property type="protein sequence ID" value="AAA67574.1"/>
    <property type="molecule type" value="Genomic_DNA"/>
</dbReference>
<dbReference type="EMBL" id="U00096">
    <property type="protein sequence ID" value="AAT48208.1"/>
    <property type="molecule type" value="Genomic_DNA"/>
</dbReference>
<dbReference type="EMBL" id="AP009048">
    <property type="protein sequence ID" value="BAE77526.1"/>
    <property type="molecule type" value="Genomic_DNA"/>
</dbReference>
<dbReference type="EMBL" id="M32253">
    <property type="protein sequence ID" value="AAA24023.1"/>
    <property type="molecule type" value="Genomic_DNA"/>
</dbReference>
<dbReference type="EMBL" id="X02413">
    <property type="protein sequence ID" value="CAA26263.1"/>
    <property type="molecule type" value="Genomic_DNA"/>
</dbReference>
<dbReference type="EMBL" id="K03503">
    <property type="protein sequence ID" value="AAA24013.1"/>
    <property type="molecule type" value="Genomic_DNA"/>
</dbReference>
<dbReference type="PIR" id="A27310">
    <property type="entry name" value="DWECDA"/>
</dbReference>
<dbReference type="RefSeq" id="WP_001127399.1">
    <property type="nucleotide sequence ID" value="NZ_SSZK01000025.1"/>
</dbReference>
<dbReference type="RefSeq" id="YP_026248.1">
    <property type="nucleotide sequence ID" value="NC_000913.3"/>
</dbReference>
<dbReference type="SMR" id="P05791"/>
<dbReference type="BioGRID" id="4263329">
    <property type="interactions" value="5"/>
</dbReference>
<dbReference type="DIP" id="DIP-10021N"/>
<dbReference type="FunCoup" id="P05791">
    <property type="interactions" value="718"/>
</dbReference>
<dbReference type="IntAct" id="P05791">
    <property type="interactions" value="1"/>
</dbReference>
<dbReference type="STRING" id="511145.b3771"/>
<dbReference type="jPOST" id="P05791"/>
<dbReference type="PaxDb" id="511145-b3771"/>
<dbReference type="EnsemblBacteria" id="AAT48208">
    <property type="protein sequence ID" value="AAT48208"/>
    <property type="gene ID" value="b3771"/>
</dbReference>
<dbReference type="GeneID" id="948277"/>
<dbReference type="KEGG" id="ecj:JW5605"/>
<dbReference type="KEGG" id="eco:b3771"/>
<dbReference type="KEGG" id="ecoc:C3026_20425"/>
<dbReference type="PATRIC" id="fig|1411691.4.peg.2935"/>
<dbReference type="EchoBASE" id="EB0491"/>
<dbReference type="eggNOG" id="COG0129">
    <property type="taxonomic scope" value="Bacteria"/>
</dbReference>
<dbReference type="HOGENOM" id="CLU_014271_4_2_6"/>
<dbReference type="InParanoid" id="P05791"/>
<dbReference type="OMA" id="STQGRNM"/>
<dbReference type="OrthoDB" id="9807077at2"/>
<dbReference type="PhylomeDB" id="P05791"/>
<dbReference type="BioCyc" id="EcoCyc:DIHYDROXYACIDDEHYDRAT-MONOMER"/>
<dbReference type="BioCyc" id="MetaCyc:DIHYDROXYACIDDEHYDRAT-MONOMER"/>
<dbReference type="UniPathway" id="UPA00047">
    <property type="reaction ID" value="UER00057"/>
</dbReference>
<dbReference type="UniPathway" id="UPA00049">
    <property type="reaction ID" value="UER00061"/>
</dbReference>
<dbReference type="PRO" id="PR:P05791"/>
<dbReference type="Proteomes" id="UP000000625">
    <property type="component" value="Chromosome"/>
</dbReference>
<dbReference type="GO" id="GO:0005829">
    <property type="term" value="C:cytosol"/>
    <property type="evidence" value="ECO:0000314"/>
    <property type="project" value="EcoCyc"/>
</dbReference>
<dbReference type="GO" id="GO:0051537">
    <property type="term" value="F:2 iron, 2 sulfur cluster binding"/>
    <property type="evidence" value="ECO:0007669"/>
    <property type="project" value="UniProtKB-UniRule"/>
</dbReference>
<dbReference type="GO" id="GO:0051539">
    <property type="term" value="F:4 iron, 4 sulfur cluster binding"/>
    <property type="evidence" value="ECO:0000314"/>
    <property type="project" value="EcoCyc"/>
</dbReference>
<dbReference type="GO" id="GO:0004160">
    <property type="term" value="F:dihydroxy-acid dehydratase activity"/>
    <property type="evidence" value="ECO:0000314"/>
    <property type="project" value="EcoCyc"/>
</dbReference>
<dbReference type="GO" id="GO:0016836">
    <property type="term" value="F:hydro-lyase activity"/>
    <property type="evidence" value="ECO:0000318"/>
    <property type="project" value="GO_Central"/>
</dbReference>
<dbReference type="GO" id="GO:0051536">
    <property type="term" value="F:iron-sulfur cluster binding"/>
    <property type="evidence" value="ECO:0000314"/>
    <property type="project" value="EcoCyc"/>
</dbReference>
<dbReference type="GO" id="GO:0000287">
    <property type="term" value="F:magnesium ion binding"/>
    <property type="evidence" value="ECO:0007669"/>
    <property type="project" value="UniProtKB-UniRule"/>
</dbReference>
<dbReference type="GO" id="GO:0009097">
    <property type="term" value="P:isoleucine biosynthetic process"/>
    <property type="evidence" value="ECO:0000314"/>
    <property type="project" value="EcoCyc"/>
</dbReference>
<dbReference type="GO" id="GO:0009099">
    <property type="term" value="P:L-valine biosynthetic process"/>
    <property type="evidence" value="ECO:0000314"/>
    <property type="project" value="EcoCyc"/>
</dbReference>
<dbReference type="FunFam" id="3.50.30.80:FF:000001">
    <property type="entry name" value="Dihydroxy-acid dehydratase"/>
    <property type="match status" value="1"/>
</dbReference>
<dbReference type="Gene3D" id="3.50.30.80">
    <property type="entry name" value="IlvD/EDD C-terminal domain-like"/>
    <property type="match status" value="1"/>
</dbReference>
<dbReference type="HAMAP" id="MF_00012">
    <property type="entry name" value="IlvD"/>
    <property type="match status" value="1"/>
</dbReference>
<dbReference type="InterPro" id="IPR042096">
    <property type="entry name" value="Dihydro-acid_dehy_C"/>
</dbReference>
<dbReference type="InterPro" id="IPR004404">
    <property type="entry name" value="DihydroxyA_deHydtase"/>
</dbReference>
<dbReference type="InterPro" id="IPR020558">
    <property type="entry name" value="DiOHA_6PGluconate_deHydtase_CS"/>
</dbReference>
<dbReference type="InterPro" id="IPR056740">
    <property type="entry name" value="ILV_EDD_C"/>
</dbReference>
<dbReference type="InterPro" id="IPR000581">
    <property type="entry name" value="ILV_EDD_N"/>
</dbReference>
<dbReference type="InterPro" id="IPR037237">
    <property type="entry name" value="IlvD/EDD_N"/>
</dbReference>
<dbReference type="NCBIfam" id="TIGR00110">
    <property type="entry name" value="ilvD"/>
    <property type="match status" value="1"/>
</dbReference>
<dbReference type="NCBIfam" id="NF009103">
    <property type="entry name" value="PRK12448.1"/>
    <property type="match status" value="1"/>
</dbReference>
<dbReference type="PANTHER" id="PTHR43661">
    <property type="entry name" value="D-XYLONATE DEHYDRATASE"/>
    <property type="match status" value="1"/>
</dbReference>
<dbReference type="PANTHER" id="PTHR43661:SF3">
    <property type="entry name" value="D-XYLONATE DEHYDRATASE YAGF-RELATED"/>
    <property type="match status" value="1"/>
</dbReference>
<dbReference type="Pfam" id="PF24877">
    <property type="entry name" value="ILV_EDD_C"/>
    <property type="match status" value="1"/>
</dbReference>
<dbReference type="Pfam" id="PF00920">
    <property type="entry name" value="ILVD_EDD_N"/>
    <property type="match status" value="1"/>
</dbReference>
<dbReference type="SUPFAM" id="SSF143975">
    <property type="entry name" value="IlvD/EDD N-terminal domain-like"/>
    <property type="match status" value="1"/>
</dbReference>
<dbReference type="SUPFAM" id="SSF52016">
    <property type="entry name" value="LeuD/IlvD-like"/>
    <property type="match status" value="1"/>
</dbReference>
<dbReference type="PROSITE" id="PS00886">
    <property type="entry name" value="ILVD_EDD_1"/>
    <property type="match status" value="1"/>
</dbReference>
<dbReference type="PROSITE" id="PS00887">
    <property type="entry name" value="ILVD_EDD_2"/>
    <property type="match status" value="1"/>
</dbReference>
<organism>
    <name type="scientific">Escherichia coli (strain K12)</name>
    <dbReference type="NCBI Taxonomy" id="83333"/>
    <lineage>
        <taxon>Bacteria</taxon>
        <taxon>Pseudomonadati</taxon>
        <taxon>Pseudomonadota</taxon>
        <taxon>Gammaproteobacteria</taxon>
        <taxon>Enterobacterales</taxon>
        <taxon>Enterobacteriaceae</taxon>
        <taxon>Escherichia</taxon>
    </lineage>
</organism>
<protein>
    <recommendedName>
        <fullName evidence="6 7">Dihydroxy-acid dehydratase</fullName>
        <shortName evidence="6">DAD</shortName>
        <ecNumber evidence="2 5">4.2.1.9</ecNumber>
    </recommendedName>
</protein>
<proteinExistence type="evidence at protein level"/>
<accession>P05791</accession>
<accession>Q2M880</accession>
<name>ILVD_ECOLI</name>